<protein>
    <recommendedName>
        <fullName>Protein RecA</fullName>
    </recommendedName>
    <alternativeName>
        <fullName>Recombinase A</fullName>
    </alternativeName>
    <component>
        <recommendedName>
            <fullName>Msh RecA intein</fullName>
        </recommendedName>
    </component>
</protein>
<organism>
    <name type="scientific">Mycobacterium shimoidei</name>
    <dbReference type="NCBI Taxonomy" id="29313"/>
    <lineage>
        <taxon>Bacteria</taxon>
        <taxon>Bacillati</taxon>
        <taxon>Actinomycetota</taxon>
        <taxon>Actinomycetes</taxon>
        <taxon>Mycobacteriales</taxon>
        <taxon>Mycobacteriaceae</taxon>
        <taxon>Mycobacterium</taxon>
    </lineage>
</organism>
<name>RECA_MYCSH</name>
<keyword id="KW-0067">ATP-binding</keyword>
<keyword id="KW-0068">Autocatalytic cleavage</keyword>
<keyword id="KW-0963">Cytoplasm</keyword>
<keyword id="KW-0227">DNA damage</keyword>
<keyword id="KW-0233">DNA recombination</keyword>
<keyword id="KW-0234">DNA repair</keyword>
<keyword id="KW-0238">DNA-binding</keyword>
<keyword id="KW-0547">Nucleotide-binding</keyword>
<keyword id="KW-0651">Protein splicing</keyword>
<keyword id="KW-0742">SOS response</keyword>
<dbReference type="EMBL" id="AJ251338">
    <property type="protein sequence ID" value="CAC09592.1"/>
    <property type="molecule type" value="Genomic_DNA"/>
</dbReference>
<dbReference type="SMR" id="Q9F410"/>
<dbReference type="STRING" id="29313.BHQ16_21240"/>
<dbReference type="GO" id="GO:0005829">
    <property type="term" value="C:cytosol"/>
    <property type="evidence" value="ECO:0007669"/>
    <property type="project" value="TreeGrafter"/>
</dbReference>
<dbReference type="GO" id="GO:0005524">
    <property type="term" value="F:ATP binding"/>
    <property type="evidence" value="ECO:0007669"/>
    <property type="project" value="UniProtKB-KW"/>
</dbReference>
<dbReference type="GO" id="GO:0008094">
    <property type="term" value="F:ATP-dependent activity, acting on DNA"/>
    <property type="evidence" value="ECO:0007669"/>
    <property type="project" value="InterPro"/>
</dbReference>
<dbReference type="GO" id="GO:0004519">
    <property type="term" value="F:endonuclease activity"/>
    <property type="evidence" value="ECO:0007669"/>
    <property type="project" value="InterPro"/>
</dbReference>
<dbReference type="GO" id="GO:0003697">
    <property type="term" value="F:single-stranded DNA binding"/>
    <property type="evidence" value="ECO:0007669"/>
    <property type="project" value="InterPro"/>
</dbReference>
<dbReference type="GO" id="GO:0006310">
    <property type="term" value="P:DNA recombination"/>
    <property type="evidence" value="ECO:0007669"/>
    <property type="project" value="UniProtKB-KW"/>
</dbReference>
<dbReference type="GO" id="GO:0006281">
    <property type="term" value="P:DNA repair"/>
    <property type="evidence" value="ECO:0007669"/>
    <property type="project" value="UniProtKB-KW"/>
</dbReference>
<dbReference type="GO" id="GO:0016539">
    <property type="term" value="P:intein-mediated protein splicing"/>
    <property type="evidence" value="ECO:0007669"/>
    <property type="project" value="InterPro"/>
</dbReference>
<dbReference type="GO" id="GO:0009432">
    <property type="term" value="P:SOS response"/>
    <property type="evidence" value="ECO:0007669"/>
    <property type="project" value="UniProtKB-KW"/>
</dbReference>
<dbReference type="CDD" id="cd00081">
    <property type="entry name" value="Hint"/>
    <property type="match status" value="1"/>
</dbReference>
<dbReference type="Gene3D" id="2.170.16.10">
    <property type="entry name" value="Hedgehog/Intein (Hint) domain"/>
    <property type="match status" value="1"/>
</dbReference>
<dbReference type="Gene3D" id="3.10.28.10">
    <property type="entry name" value="Homing endonucleases"/>
    <property type="match status" value="2"/>
</dbReference>
<dbReference type="Gene3D" id="3.40.50.300">
    <property type="entry name" value="P-loop containing nucleotide triphosphate hydrolases"/>
    <property type="match status" value="1"/>
</dbReference>
<dbReference type="InterPro" id="IPR013765">
    <property type="entry name" value="DNA_recomb/repair_RecA"/>
</dbReference>
<dbReference type="InterPro" id="IPR020584">
    <property type="entry name" value="DNA_recomb/repair_RecA_CS"/>
</dbReference>
<dbReference type="InterPro" id="IPR003586">
    <property type="entry name" value="Hint_dom_C"/>
</dbReference>
<dbReference type="InterPro" id="IPR003587">
    <property type="entry name" value="Hint_dom_N"/>
</dbReference>
<dbReference type="InterPro" id="IPR036844">
    <property type="entry name" value="Hint_dom_sf"/>
</dbReference>
<dbReference type="InterPro" id="IPR027434">
    <property type="entry name" value="Homing_endonucl"/>
</dbReference>
<dbReference type="InterPro" id="IPR006142">
    <property type="entry name" value="INTEIN"/>
</dbReference>
<dbReference type="InterPro" id="IPR030934">
    <property type="entry name" value="Intein_C"/>
</dbReference>
<dbReference type="InterPro" id="IPR006141">
    <property type="entry name" value="Intein_N"/>
</dbReference>
<dbReference type="InterPro" id="IPR004860">
    <property type="entry name" value="LAGLIDADG_dom"/>
</dbReference>
<dbReference type="InterPro" id="IPR027417">
    <property type="entry name" value="P-loop_NTPase"/>
</dbReference>
<dbReference type="InterPro" id="IPR049428">
    <property type="entry name" value="RecA-like_N"/>
</dbReference>
<dbReference type="InterPro" id="IPR020587">
    <property type="entry name" value="RecA_monomer-monomer_interface"/>
</dbReference>
<dbReference type="NCBIfam" id="TIGR01443">
    <property type="entry name" value="intein_Cterm"/>
    <property type="match status" value="1"/>
</dbReference>
<dbReference type="NCBIfam" id="TIGR01445">
    <property type="entry name" value="intein_Nterm"/>
    <property type="match status" value="1"/>
</dbReference>
<dbReference type="PANTHER" id="PTHR45900:SF1">
    <property type="entry name" value="MITOCHONDRIAL DNA REPAIR PROTEIN RECA HOMOLOG-RELATED"/>
    <property type="match status" value="1"/>
</dbReference>
<dbReference type="PANTHER" id="PTHR45900">
    <property type="entry name" value="RECA"/>
    <property type="match status" value="1"/>
</dbReference>
<dbReference type="Pfam" id="PF03161">
    <property type="entry name" value="LAGLIDADG_2"/>
    <property type="match status" value="1"/>
</dbReference>
<dbReference type="Pfam" id="PF00154">
    <property type="entry name" value="RecA"/>
    <property type="match status" value="1"/>
</dbReference>
<dbReference type="PRINTS" id="PR00379">
    <property type="entry name" value="INTEIN"/>
</dbReference>
<dbReference type="PRINTS" id="PR00142">
    <property type="entry name" value="RECA"/>
</dbReference>
<dbReference type="SMART" id="SM00305">
    <property type="entry name" value="HintC"/>
    <property type="match status" value="1"/>
</dbReference>
<dbReference type="SMART" id="SM00306">
    <property type="entry name" value="HintN"/>
    <property type="match status" value="1"/>
</dbReference>
<dbReference type="SUPFAM" id="SSF51294">
    <property type="entry name" value="Hedgehog/intein (Hint) domain"/>
    <property type="match status" value="1"/>
</dbReference>
<dbReference type="SUPFAM" id="SSF55608">
    <property type="entry name" value="Homing endonucleases"/>
    <property type="match status" value="1"/>
</dbReference>
<dbReference type="PROSITE" id="PS50818">
    <property type="entry name" value="INTEIN_C_TER"/>
    <property type="match status" value="1"/>
</dbReference>
<dbReference type="PROSITE" id="PS50817">
    <property type="entry name" value="INTEIN_N_TER"/>
    <property type="match status" value="1"/>
</dbReference>
<dbReference type="PROSITE" id="PS00321">
    <property type="entry name" value="RECA_1"/>
    <property type="match status" value="1"/>
</dbReference>
<dbReference type="PROSITE" id="PS50163">
    <property type="entry name" value="RECA_3"/>
    <property type="match status" value="1"/>
</dbReference>
<accession>Q9F410</accession>
<evidence type="ECO:0000250" key="1"/>
<evidence type="ECO:0000255" key="2"/>
<evidence type="ECO:0000305" key="3"/>
<feature type="chain" id="PRO_0000030263" description="Protein RecA, 1st part" evidence="2">
    <location>
        <begin position="1" status="less than"/>
        <end position="9"/>
    </location>
</feature>
<feature type="chain" id="PRO_0000030264" description="Msh RecA intein" evidence="2">
    <location>
        <begin position="10"/>
        <end position="373"/>
    </location>
</feature>
<feature type="chain" id="PRO_0000030265" description="Protein RecA, 2nd part" evidence="2">
    <location>
        <begin position="374"/>
        <end position="423" status="greater than"/>
    </location>
</feature>
<feature type="non-terminal residue">
    <location>
        <position position="1"/>
    </location>
</feature>
<feature type="non-terminal residue">
    <location>
        <position position="423"/>
    </location>
</feature>
<reference key="1">
    <citation type="journal article" date="2000" name="FEBS Lett.">
        <title>Inteins invading mycobacterial RecA proteins.</title>
        <authorList>
            <person name="Saves I."/>
            <person name="Laneelle M.-A."/>
            <person name="Daffe M."/>
            <person name="Masson J.-M."/>
        </authorList>
    </citation>
    <scope>NUCLEOTIDE SEQUENCE [GENOMIC DNA]</scope>
    <source>
        <strain>ATCC 27962 / DSM 44152 / JCM 12376</strain>
    </source>
</reference>
<proteinExistence type="inferred from homology"/>
<comment type="function">
    <text evidence="1">Can catalyze the hydrolysis of ATP in the presence of single-stranded DNA, the ATP-dependent uptake of single-stranded DNA by duplex DNA, and the ATP-dependent hybridization of homologous single-stranded DNAs. It interacts with LexA causing its activation and leading to its autocatalytic cleavage (By similarity).</text>
</comment>
<comment type="subcellular location">
    <subcellularLocation>
        <location evidence="1">Cytoplasm</location>
    </subcellularLocation>
</comment>
<comment type="PTM">
    <text evidence="1">This protein undergoes a protein self splicing that involves a post-translational excision of the intervening region (intein) followed by peptide ligation.</text>
</comment>
<comment type="similarity">
    <text evidence="3">Belongs to the RecA family.</text>
</comment>
<gene>
    <name type="primary">recA</name>
</gene>
<sequence>REKIGVMFGCMNYSTRVTLADGSTEKIGKIVNNKMDVKVLSYDPDSDRIVPRKIVNWFNNGPAEQFLQFTVEKSGGNGKSQFAATPNHLIRTPAGWTEAGDLNTGDRVLAAEPHLLSDQQFQVVLGSLMGDGNLSPNRRDRNGVRFRLGHGAKQAEYLQWKTALMGNIGHTVRENAKGASFVDFTPLPELAELQRAVYMGDGKKFFSEEYLKALTPLALAIWYMDDGSFTLRSRGLQERTAGGSGRIAICVEAMTEGTRVRLRDYLRDTHGLDVRLRSAGSAGKTVLVFSMAATAKFQELVAPYMAPSMEYKLLPRFRGRSTVRPQFVEPTQRLVPARILDVHVKPHTRSMNRFDIEVEGNHNYFVDGVMVHNSPETTTGGKALKFYASVRMDVRRIETLKDGTDAVGNRTRVKVVKNKVSPP</sequence>